<name>SUCC_CHLCH</name>
<comment type="function">
    <text evidence="1">Succinyl-CoA synthetase functions in the citric acid cycle (TCA), coupling the hydrolysis of succinyl-CoA to the synthesis of either ATP or GTP and thus represents the only step of substrate-level phosphorylation in the TCA. The beta subunit provides nucleotide specificity of the enzyme and binds the substrate succinate, while the binding sites for coenzyme A and phosphate are found in the alpha subunit.</text>
</comment>
<comment type="catalytic activity">
    <reaction evidence="1">
        <text>succinate + ATP + CoA = succinyl-CoA + ADP + phosphate</text>
        <dbReference type="Rhea" id="RHEA:17661"/>
        <dbReference type="ChEBI" id="CHEBI:30031"/>
        <dbReference type="ChEBI" id="CHEBI:30616"/>
        <dbReference type="ChEBI" id="CHEBI:43474"/>
        <dbReference type="ChEBI" id="CHEBI:57287"/>
        <dbReference type="ChEBI" id="CHEBI:57292"/>
        <dbReference type="ChEBI" id="CHEBI:456216"/>
        <dbReference type="EC" id="6.2.1.5"/>
    </reaction>
    <physiologicalReaction direction="right-to-left" evidence="1">
        <dbReference type="Rhea" id="RHEA:17663"/>
    </physiologicalReaction>
</comment>
<comment type="catalytic activity">
    <reaction evidence="1">
        <text>GTP + succinate + CoA = succinyl-CoA + GDP + phosphate</text>
        <dbReference type="Rhea" id="RHEA:22120"/>
        <dbReference type="ChEBI" id="CHEBI:30031"/>
        <dbReference type="ChEBI" id="CHEBI:37565"/>
        <dbReference type="ChEBI" id="CHEBI:43474"/>
        <dbReference type="ChEBI" id="CHEBI:57287"/>
        <dbReference type="ChEBI" id="CHEBI:57292"/>
        <dbReference type="ChEBI" id="CHEBI:58189"/>
    </reaction>
    <physiologicalReaction direction="right-to-left" evidence="1">
        <dbReference type="Rhea" id="RHEA:22122"/>
    </physiologicalReaction>
</comment>
<comment type="cofactor">
    <cofactor evidence="1">
        <name>Mg(2+)</name>
        <dbReference type="ChEBI" id="CHEBI:18420"/>
    </cofactor>
    <text evidence="1">Binds 1 Mg(2+) ion per subunit.</text>
</comment>
<comment type="pathway">
    <text evidence="1">Carbohydrate metabolism; tricarboxylic acid cycle; succinate from succinyl-CoA (ligase route): step 1/1.</text>
</comment>
<comment type="subunit">
    <text evidence="1">Heterotetramer of two alpha and two beta subunits.</text>
</comment>
<comment type="similarity">
    <text evidence="1">Belongs to the succinate/malate CoA ligase beta subunit family.</text>
</comment>
<protein>
    <recommendedName>
        <fullName evidence="1">Succinate--CoA ligase [ADP-forming] subunit beta</fullName>
        <ecNumber evidence="1">6.2.1.5</ecNumber>
    </recommendedName>
    <alternativeName>
        <fullName evidence="1">Succinyl-CoA synthetase subunit beta</fullName>
        <shortName evidence="1">SCS-beta</shortName>
    </alternativeName>
</protein>
<gene>
    <name evidence="1" type="primary">sucC</name>
    <name type="ordered locus">Cag_0338</name>
</gene>
<organism>
    <name type="scientific">Chlorobium chlorochromatii (strain CaD3)</name>
    <dbReference type="NCBI Taxonomy" id="340177"/>
    <lineage>
        <taxon>Bacteria</taxon>
        <taxon>Pseudomonadati</taxon>
        <taxon>Chlorobiota</taxon>
        <taxon>Chlorobiia</taxon>
        <taxon>Chlorobiales</taxon>
        <taxon>Chlorobiaceae</taxon>
        <taxon>Chlorobium/Pelodictyon group</taxon>
        <taxon>Chlorobium</taxon>
    </lineage>
</organism>
<evidence type="ECO:0000255" key="1">
    <source>
        <dbReference type="HAMAP-Rule" id="MF_00558"/>
    </source>
</evidence>
<accession>Q3ATR4</accession>
<reference key="1">
    <citation type="submission" date="2005-08" db="EMBL/GenBank/DDBJ databases">
        <title>Complete sequence of Chlorobium chlorochromatii CaD3.</title>
        <authorList>
            <consortium name="US DOE Joint Genome Institute"/>
            <person name="Copeland A."/>
            <person name="Lucas S."/>
            <person name="Lapidus A."/>
            <person name="Barry K."/>
            <person name="Detter J.C."/>
            <person name="Glavina T."/>
            <person name="Hammon N."/>
            <person name="Israni S."/>
            <person name="Pitluck S."/>
            <person name="Bryant D."/>
            <person name="Schmutz J."/>
            <person name="Larimer F."/>
            <person name="Land M."/>
            <person name="Kyrpides N."/>
            <person name="Ivanova N."/>
            <person name="Richardson P."/>
        </authorList>
    </citation>
    <scope>NUCLEOTIDE SEQUENCE [LARGE SCALE GENOMIC DNA]</scope>
    <source>
        <strain>CaD3</strain>
    </source>
</reference>
<proteinExistence type="inferred from homology"/>
<feature type="chain" id="PRO_1000082060" description="Succinate--CoA ligase [ADP-forming] subunit beta">
    <location>
        <begin position="1"/>
        <end position="390"/>
    </location>
</feature>
<feature type="domain" description="ATP-grasp" evidence="1">
    <location>
        <begin position="9"/>
        <end position="248"/>
    </location>
</feature>
<feature type="binding site" evidence="1">
    <location>
        <position position="50"/>
    </location>
    <ligand>
        <name>ATP</name>
        <dbReference type="ChEBI" id="CHEBI:30616"/>
    </ligand>
</feature>
<feature type="binding site" evidence="1">
    <location>
        <begin position="57"/>
        <end position="59"/>
    </location>
    <ligand>
        <name>ATP</name>
        <dbReference type="ChEBI" id="CHEBI:30616"/>
    </ligand>
</feature>
<feature type="binding site" evidence="1">
    <location>
        <position position="103"/>
    </location>
    <ligand>
        <name>ATP</name>
        <dbReference type="ChEBI" id="CHEBI:30616"/>
    </ligand>
</feature>
<feature type="binding site" evidence="1">
    <location>
        <position position="106"/>
    </location>
    <ligand>
        <name>ATP</name>
        <dbReference type="ChEBI" id="CHEBI:30616"/>
    </ligand>
</feature>
<feature type="binding site" evidence="1">
    <location>
        <position position="111"/>
    </location>
    <ligand>
        <name>ATP</name>
        <dbReference type="ChEBI" id="CHEBI:30616"/>
    </ligand>
</feature>
<feature type="binding site" evidence="1">
    <location>
        <position position="203"/>
    </location>
    <ligand>
        <name>Mg(2+)</name>
        <dbReference type="ChEBI" id="CHEBI:18420"/>
    </ligand>
</feature>
<feature type="binding site" evidence="1">
    <location>
        <position position="217"/>
    </location>
    <ligand>
        <name>Mg(2+)</name>
        <dbReference type="ChEBI" id="CHEBI:18420"/>
    </ligand>
</feature>
<feature type="binding site" evidence="1">
    <location>
        <position position="268"/>
    </location>
    <ligand>
        <name>substrate</name>
        <note>ligand shared with subunit alpha</note>
    </ligand>
</feature>
<feature type="binding site" evidence="1">
    <location>
        <begin position="325"/>
        <end position="327"/>
    </location>
    <ligand>
        <name>substrate</name>
        <note>ligand shared with subunit alpha</note>
    </ligand>
</feature>
<keyword id="KW-0067">ATP-binding</keyword>
<keyword id="KW-0436">Ligase</keyword>
<keyword id="KW-0460">Magnesium</keyword>
<keyword id="KW-0479">Metal-binding</keyword>
<keyword id="KW-0547">Nucleotide-binding</keyword>
<keyword id="KW-0816">Tricarboxylic acid cycle</keyword>
<sequence length="390" mass="42015">MNIHEYQGKDILRKFGVTVPKGIVAYSADEAKQAAEQLFAETGSSVVVVKAQIHAGGRGKAGGVKLAKSPEEAFEIARQMIGMTLITHQTGPEGKVVSRLLIEEGMGIEKEFYVGITLDRATSRNVLMVSTEGGMEIETVAEETPEKLLKIQIDPLFGMQGFQAREAAFFLGLEGEQFRNAVNFITALYKAYTSIDASVAEINPLVVTSEGKVIALDAKINFDDNALYRHKEYMELRDTSEEDPFEVEASKSNLNYVRLDGNVGCMVNGAGLAMGTMDIIQLAGGKPANFLDVGGTASPQTVEEGFKIILSDKNVRAILVNIFGGIVRCDRVAGGIMEAAKKMDLHLPVIVRLEGTNASIAQQMLDESGLSLIAAKGLRDAAQKVQEALA</sequence>
<dbReference type="EC" id="6.2.1.5" evidence="1"/>
<dbReference type="EMBL" id="CP000108">
    <property type="protein sequence ID" value="ABB27611.1"/>
    <property type="molecule type" value="Genomic_DNA"/>
</dbReference>
<dbReference type="SMR" id="Q3ATR4"/>
<dbReference type="STRING" id="340177.Cag_0338"/>
<dbReference type="KEGG" id="cch:Cag_0338"/>
<dbReference type="eggNOG" id="COG0045">
    <property type="taxonomic scope" value="Bacteria"/>
</dbReference>
<dbReference type="HOGENOM" id="CLU_037430_0_2_10"/>
<dbReference type="OrthoDB" id="9802602at2"/>
<dbReference type="UniPathway" id="UPA00223">
    <property type="reaction ID" value="UER00999"/>
</dbReference>
<dbReference type="GO" id="GO:0005829">
    <property type="term" value="C:cytosol"/>
    <property type="evidence" value="ECO:0007669"/>
    <property type="project" value="TreeGrafter"/>
</dbReference>
<dbReference type="GO" id="GO:0042709">
    <property type="term" value="C:succinate-CoA ligase complex"/>
    <property type="evidence" value="ECO:0007669"/>
    <property type="project" value="TreeGrafter"/>
</dbReference>
<dbReference type="GO" id="GO:0005524">
    <property type="term" value="F:ATP binding"/>
    <property type="evidence" value="ECO:0007669"/>
    <property type="project" value="UniProtKB-UniRule"/>
</dbReference>
<dbReference type="GO" id="GO:0000287">
    <property type="term" value="F:magnesium ion binding"/>
    <property type="evidence" value="ECO:0007669"/>
    <property type="project" value="UniProtKB-UniRule"/>
</dbReference>
<dbReference type="GO" id="GO:0004775">
    <property type="term" value="F:succinate-CoA ligase (ADP-forming) activity"/>
    <property type="evidence" value="ECO:0007669"/>
    <property type="project" value="UniProtKB-UniRule"/>
</dbReference>
<dbReference type="GO" id="GO:0004776">
    <property type="term" value="F:succinate-CoA ligase (GDP-forming) activity"/>
    <property type="evidence" value="ECO:0007669"/>
    <property type="project" value="RHEA"/>
</dbReference>
<dbReference type="GO" id="GO:0006104">
    <property type="term" value="P:succinyl-CoA metabolic process"/>
    <property type="evidence" value="ECO:0007669"/>
    <property type="project" value="TreeGrafter"/>
</dbReference>
<dbReference type="GO" id="GO:0006099">
    <property type="term" value="P:tricarboxylic acid cycle"/>
    <property type="evidence" value="ECO:0007669"/>
    <property type="project" value="UniProtKB-UniRule"/>
</dbReference>
<dbReference type="FunFam" id="3.30.1490.20:FF:000002">
    <property type="entry name" value="Succinate--CoA ligase [ADP-forming] subunit beta"/>
    <property type="match status" value="1"/>
</dbReference>
<dbReference type="FunFam" id="3.30.470.20:FF:000002">
    <property type="entry name" value="Succinate--CoA ligase [ADP-forming] subunit beta"/>
    <property type="match status" value="1"/>
</dbReference>
<dbReference type="FunFam" id="3.40.50.261:FF:000001">
    <property type="entry name" value="Succinate--CoA ligase [ADP-forming] subunit beta"/>
    <property type="match status" value="1"/>
</dbReference>
<dbReference type="Gene3D" id="3.30.1490.20">
    <property type="entry name" value="ATP-grasp fold, A domain"/>
    <property type="match status" value="1"/>
</dbReference>
<dbReference type="Gene3D" id="3.30.470.20">
    <property type="entry name" value="ATP-grasp fold, B domain"/>
    <property type="match status" value="1"/>
</dbReference>
<dbReference type="Gene3D" id="3.40.50.261">
    <property type="entry name" value="Succinyl-CoA synthetase domains"/>
    <property type="match status" value="1"/>
</dbReference>
<dbReference type="HAMAP" id="MF_00558">
    <property type="entry name" value="Succ_CoA_beta"/>
    <property type="match status" value="1"/>
</dbReference>
<dbReference type="InterPro" id="IPR011761">
    <property type="entry name" value="ATP-grasp"/>
</dbReference>
<dbReference type="InterPro" id="IPR013650">
    <property type="entry name" value="ATP-grasp_succ-CoA_synth-type"/>
</dbReference>
<dbReference type="InterPro" id="IPR013815">
    <property type="entry name" value="ATP_grasp_subdomain_1"/>
</dbReference>
<dbReference type="InterPro" id="IPR017866">
    <property type="entry name" value="Succ-CoA_synthase_bsu_CS"/>
</dbReference>
<dbReference type="InterPro" id="IPR005811">
    <property type="entry name" value="SUCC_ACL_C"/>
</dbReference>
<dbReference type="InterPro" id="IPR005809">
    <property type="entry name" value="Succ_CoA_ligase-like_bsu"/>
</dbReference>
<dbReference type="InterPro" id="IPR016102">
    <property type="entry name" value="Succinyl-CoA_synth-like"/>
</dbReference>
<dbReference type="NCBIfam" id="NF001913">
    <property type="entry name" value="PRK00696.1"/>
    <property type="match status" value="1"/>
</dbReference>
<dbReference type="NCBIfam" id="TIGR01016">
    <property type="entry name" value="sucCoAbeta"/>
    <property type="match status" value="1"/>
</dbReference>
<dbReference type="PANTHER" id="PTHR11815:SF10">
    <property type="entry name" value="SUCCINATE--COA LIGASE [GDP-FORMING] SUBUNIT BETA, MITOCHONDRIAL"/>
    <property type="match status" value="1"/>
</dbReference>
<dbReference type="PANTHER" id="PTHR11815">
    <property type="entry name" value="SUCCINYL-COA SYNTHETASE BETA CHAIN"/>
    <property type="match status" value="1"/>
</dbReference>
<dbReference type="Pfam" id="PF08442">
    <property type="entry name" value="ATP-grasp_2"/>
    <property type="match status" value="1"/>
</dbReference>
<dbReference type="Pfam" id="PF00549">
    <property type="entry name" value="Ligase_CoA"/>
    <property type="match status" value="1"/>
</dbReference>
<dbReference type="PIRSF" id="PIRSF001554">
    <property type="entry name" value="SucCS_beta"/>
    <property type="match status" value="1"/>
</dbReference>
<dbReference type="SUPFAM" id="SSF56059">
    <property type="entry name" value="Glutathione synthetase ATP-binding domain-like"/>
    <property type="match status" value="1"/>
</dbReference>
<dbReference type="SUPFAM" id="SSF52210">
    <property type="entry name" value="Succinyl-CoA synthetase domains"/>
    <property type="match status" value="1"/>
</dbReference>
<dbReference type="PROSITE" id="PS50975">
    <property type="entry name" value="ATP_GRASP"/>
    <property type="match status" value="1"/>
</dbReference>
<dbReference type="PROSITE" id="PS01217">
    <property type="entry name" value="SUCCINYL_COA_LIG_3"/>
    <property type="match status" value="1"/>
</dbReference>